<evidence type="ECO:0000250" key="1"/>
<evidence type="ECO:0000250" key="2">
    <source>
        <dbReference type="UniProtKB" id="O35526"/>
    </source>
</evidence>
<evidence type="ECO:0000250" key="3">
    <source>
        <dbReference type="UniProtKB" id="P32851"/>
    </source>
</evidence>
<evidence type="ECO:0000250" key="4">
    <source>
        <dbReference type="UniProtKB" id="Q16623"/>
    </source>
</evidence>
<evidence type="ECO:0000255" key="5"/>
<evidence type="ECO:0000255" key="6">
    <source>
        <dbReference type="PROSITE-ProRule" id="PRU00202"/>
    </source>
</evidence>
<evidence type="ECO:0000256" key="7">
    <source>
        <dbReference type="SAM" id="MobiDB-lite"/>
    </source>
</evidence>
<evidence type="ECO:0000305" key="8"/>
<evidence type="ECO:0000305" key="9">
    <source>
    </source>
</evidence>
<dbReference type="PIR" id="JQ1615">
    <property type="entry name" value="JQ1615"/>
</dbReference>
<dbReference type="RefSeq" id="XP_005225301.1">
    <property type="nucleotide sequence ID" value="XM_005225244.4"/>
</dbReference>
<dbReference type="BMRB" id="P32850"/>
<dbReference type="SMR" id="P32850"/>
<dbReference type="CORUM" id="P32850"/>
<dbReference type="FunCoup" id="P32850">
    <property type="interactions" value="1084"/>
</dbReference>
<dbReference type="IntAct" id="P32850">
    <property type="interactions" value="2"/>
</dbReference>
<dbReference type="MINT" id="P32850"/>
<dbReference type="STRING" id="9913.ENSBTAP00000003031"/>
<dbReference type="GeneID" id="788566"/>
<dbReference type="CTD" id="6804"/>
<dbReference type="VEuPathDB" id="HostDB:ENSBTAG00000017075"/>
<dbReference type="InParanoid" id="P32850"/>
<dbReference type="OMA" id="KTTHGPK"/>
<dbReference type="OrthoDB" id="10255013at2759"/>
<dbReference type="Reactome" id="R-BTA-181429">
    <property type="pathway name" value="Serotonin Neurotransmitter Release Cycle"/>
</dbReference>
<dbReference type="Reactome" id="R-BTA-181430">
    <property type="pathway name" value="Norepinephrine Neurotransmitter Release Cycle"/>
</dbReference>
<dbReference type="Reactome" id="R-BTA-210500">
    <property type="pathway name" value="Glutamate Neurotransmitter Release Cycle"/>
</dbReference>
<dbReference type="Reactome" id="R-BTA-212676">
    <property type="pathway name" value="Dopamine Neurotransmitter Release Cycle"/>
</dbReference>
<dbReference type="Reactome" id="R-BTA-264642">
    <property type="pathway name" value="Acetylcholine Neurotransmitter Release Cycle"/>
</dbReference>
<dbReference type="Reactome" id="R-BTA-449836">
    <property type="pathway name" value="Other interleukin signaling"/>
</dbReference>
<dbReference type="Reactome" id="R-BTA-5682910">
    <property type="pathway name" value="LGI-ADAM interactions"/>
</dbReference>
<dbReference type="Reactome" id="R-BTA-888590">
    <property type="pathway name" value="GABA synthesis, release, reuptake and degradation"/>
</dbReference>
<dbReference type="Reactome" id="R-BTA-9609523">
    <property type="pathway name" value="Insertion of tail-anchored proteins into the endoplasmic reticulum membrane"/>
</dbReference>
<dbReference type="Proteomes" id="UP000009136">
    <property type="component" value="Chromosome 25"/>
</dbReference>
<dbReference type="Bgee" id="ENSBTAG00000017075">
    <property type="expression patterns" value="Expressed in Ammon's horn and 104 other cell types or tissues"/>
</dbReference>
<dbReference type="GO" id="GO:0012505">
    <property type="term" value="C:endomembrane system"/>
    <property type="evidence" value="ECO:0000318"/>
    <property type="project" value="GO_Central"/>
</dbReference>
<dbReference type="GO" id="GO:0043005">
    <property type="term" value="C:neuron projection"/>
    <property type="evidence" value="ECO:0007669"/>
    <property type="project" value="UniProtKB-KW"/>
</dbReference>
<dbReference type="GO" id="GO:0005886">
    <property type="term" value="C:plasma membrane"/>
    <property type="evidence" value="ECO:0000250"/>
    <property type="project" value="UniProtKB"/>
</dbReference>
<dbReference type="GO" id="GO:0031201">
    <property type="term" value="C:SNARE complex"/>
    <property type="evidence" value="ECO:0000250"/>
    <property type="project" value="UniProtKB"/>
</dbReference>
<dbReference type="GO" id="GO:0030672">
    <property type="term" value="C:synaptic vesicle membrane"/>
    <property type="evidence" value="ECO:0007669"/>
    <property type="project" value="UniProtKB-SubCell"/>
</dbReference>
<dbReference type="GO" id="GO:0005484">
    <property type="term" value="F:SNAP receptor activity"/>
    <property type="evidence" value="ECO:0000318"/>
    <property type="project" value="GO_Central"/>
</dbReference>
<dbReference type="GO" id="GO:0000149">
    <property type="term" value="F:SNARE binding"/>
    <property type="evidence" value="ECO:0000318"/>
    <property type="project" value="GO_Central"/>
</dbReference>
<dbReference type="GO" id="GO:0006887">
    <property type="term" value="P:exocytosis"/>
    <property type="evidence" value="ECO:0000318"/>
    <property type="project" value="GO_Central"/>
</dbReference>
<dbReference type="GO" id="GO:0006886">
    <property type="term" value="P:intracellular protein transport"/>
    <property type="evidence" value="ECO:0000318"/>
    <property type="project" value="GO_Central"/>
</dbReference>
<dbReference type="GO" id="GO:0006836">
    <property type="term" value="P:neurotransmitter transport"/>
    <property type="evidence" value="ECO:0007669"/>
    <property type="project" value="UniProtKB-KW"/>
</dbReference>
<dbReference type="GO" id="GO:0045956">
    <property type="term" value="P:positive regulation of calcium ion-dependent exocytosis"/>
    <property type="evidence" value="ECO:0000250"/>
    <property type="project" value="UniProtKB"/>
</dbReference>
<dbReference type="GO" id="GO:0033605">
    <property type="term" value="P:positive regulation of catecholamine secretion"/>
    <property type="evidence" value="ECO:0000250"/>
    <property type="project" value="UniProtKB"/>
</dbReference>
<dbReference type="GO" id="GO:0010701">
    <property type="term" value="P:positive regulation of norepinephrine secretion"/>
    <property type="evidence" value="ECO:0000250"/>
    <property type="project" value="UniProtKB"/>
</dbReference>
<dbReference type="GO" id="GO:0048278">
    <property type="term" value="P:vesicle docking"/>
    <property type="evidence" value="ECO:0000318"/>
    <property type="project" value="GO_Central"/>
</dbReference>
<dbReference type="GO" id="GO:0006906">
    <property type="term" value="P:vesicle fusion"/>
    <property type="evidence" value="ECO:0000318"/>
    <property type="project" value="GO_Central"/>
</dbReference>
<dbReference type="CDD" id="cd15880">
    <property type="entry name" value="SNARE_syntaxin1"/>
    <property type="match status" value="1"/>
</dbReference>
<dbReference type="CDD" id="cd00179">
    <property type="entry name" value="SynN"/>
    <property type="match status" value="1"/>
</dbReference>
<dbReference type="FunFam" id="1.20.58.70:FF:000042">
    <property type="entry name" value="Syntaxin 11b, tandem duplicate 2"/>
    <property type="match status" value="1"/>
</dbReference>
<dbReference type="FunFam" id="1.20.5.110:FF:000005">
    <property type="entry name" value="Syntaxin 1B"/>
    <property type="match status" value="1"/>
</dbReference>
<dbReference type="Gene3D" id="1.20.5.110">
    <property type="match status" value="1"/>
</dbReference>
<dbReference type="Gene3D" id="1.20.58.70">
    <property type="match status" value="1"/>
</dbReference>
<dbReference type="InterPro" id="IPR010989">
    <property type="entry name" value="SNARE"/>
</dbReference>
<dbReference type="InterPro" id="IPR045242">
    <property type="entry name" value="Syntaxin"/>
</dbReference>
<dbReference type="InterPro" id="IPR006012">
    <property type="entry name" value="Syntaxin/epimorphin_CS"/>
</dbReference>
<dbReference type="InterPro" id="IPR006011">
    <property type="entry name" value="Syntaxin_N"/>
</dbReference>
<dbReference type="InterPro" id="IPR000727">
    <property type="entry name" value="T_SNARE_dom"/>
</dbReference>
<dbReference type="PANTHER" id="PTHR19957">
    <property type="entry name" value="SYNTAXIN"/>
    <property type="match status" value="1"/>
</dbReference>
<dbReference type="PANTHER" id="PTHR19957:SF84">
    <property type="entry name" value="SYNTAXIN-1A"/>
    <property type="match status" value="1"/>
</dbReference>
<dbReference type="Pfam" id="PF05739">
    <property type="entry name" value="SNARE"/>
    <property type="match status" value="1"/>
</dbReference>
<dbReference type="Pfam" id="PF00804">
    <property type="entry name" value="Syntaxin"/>
    <property type="match status" value="1"/>
</dbReference>
<dbReference type="SMART" id="SM00503">
    <property type="entry name" value="SynN"/>
    <property type="match status" value="1"/>
</dbReference>
<dbReference type="SMART" id="SM00397">
    <property type="entry name" value="t_SNARE"/>
    <property type="match status" value="1"/>
</dbReference>
<dbReference type="SUPFAM" id="SSF47661">
    <property type="entry name" value="t-snare proteins"/>
    <property type="match status" value="1"/>
</dbReference>
<dbReference type="PROSITE" id="PS00914">
    <property type="entry name" value="SYNTAXIN"/>
    <property type="match status" value="1"/>
</dbReference>
<dbReference type="PROSITE" id="PS50192">
    <property type="entry name" value="T_SNARE"/>
    <property type="match status" value="1"/>
</dbReference>
<protein>
    <recommendedName>
        <fullName>Syntaxin-1A</fullName>
    </recommendedName>
    <alternativeName>
        <fullName>Neuron-specific antigen HPC-1</fullName>
    </alternativeName>
    <alternativeName>
        <fullName>Synaptotagmin-associated 35 kDa protein</fullName>
        <shortName>P35A</shortName>
    </alternativeName>
</protein>
<feature type="chain" id="PRO_0000210185" description="Syntaxin-1A">
    <location>
        <begin position="1"/>
        <end position="288"/>
    </location>
</feature>
<feature type="topological domain" description="Cytoplasmic" evidence="5">
    <location>
        <begin position="1"/>
        <end position="265"/>
    </location>
</feature>
<feature type="transmembrane region" description="Helical; Anchor for type IV membrane protein" evidence="5">
    <location>
        <begin position="266"/>
        <end position="288"/>
    </location>
</feature>
<feature type="domain" description="t-SNARE coiled-coil homology" evidence="6">
    <location>
        <begin position="192"/>
        <end position="254"/>
    </location>
</feature>
<feature type="region of interest" description="Disordered" evidence="7">
    <location>
        <begin position="1"/>
        <end position="20"/>
    </location>
</feature>
<feature type="coiled-coil region" evidence="5">
    <location>
        <begin position="68"/>
        <end position="109"/>
    </location>
</feature>
<feature type="compositionally biased region" description="Basic and acidic residues" evidence="7">
    <location>
        <begin position="1"/>
        <end position="13"/>
    </location>
</feature>
<feature type="site" description="(Microbial infection) Cleavage; by C.botulinum neurotoxin type C (BoNT/C)" evidence="9">
    <location>
        <begin position="253"/>
        <end position="254"/>
    </location>
</feature>
<feature type="modified residue" description="Phosphoserine" evidence="4">
    <location>
        <position position="14"/>
    </location>
</feature>
<feature type="modified residue" description="Phosphoserine" evidence="2">
    <location>
        <position position="64"/>
    </location>
</feature>
<feature type="modified residue" description="Phosphoserine" evidence="3">
    <location>
        <position position="95"/>
    </location>
</feature>
<feature type="modified residue" description="Phosphoserine; by DAPK1" evidence="4">
    <location>
        <position position="188"/>
    </location>
</feature>
<feature type="cross-link" description="Glycyl lysine isopeptide (Lys-Gly) (interchain with G-Cter in SUMO)" evidence="4">
    <location>
        <position position="252"/>
    </location>
</feature>
<feature type="cross-link" description="Glycyl lysine isopeptide (Lys-Gly) (interchain with G-Cter in SUMO)" evidence="4">
    <location>
        <position position="253"/>
    </location>
</feature>
<feature type="cross-link" description="Glycyl lysine isopeptide (Lys-Gly) (interchain with G-Cter in SUMO)" evidence="4">
    <location>
        <position position="256"/>
    </location>
</feature>
<gene>
    <name type="primary">STX1A</name>
</gene>
<keyword id="KW-1003">Cell membrane</keyword>
<keyword id="KW-0175">Coiled coil</keyword>
<keyword id="KW-0968">Cytoplasmic vesicle</keyword>
<keyword id="KW-0903">Direct protein sequencing</keyword>
<keyword id="KW-0268">Exocytosis</keyword>
<keyword id="KW-1017">Isopeptide bond</keyword>
<keyword id="KW-0472">Membrane</keyword>
<keyword id="KW-0532">Neurotransmitter transport</keyword>
<keyword id="KW-0597">Phosphoprotein</keyword>
<keyword id="KW-1185">Reference proteome</keyword>
<keyword id="KW-0770">Synapse</keyword>
<keyword id="KW-0771">Synaptosome</keyword>
<keyword id="KW-0812">Transmembrane</keyword>
<keyword id="KW-1133">Transmembrane helix</keyword>
<keyword id="KW-0813">Transport</keyword>
<keyword id="KW-0832">Ubl conjugation</keyword>
<accession>P32850</accession>
<comment type="function">
    <text evidence="2 3">Plays an essential role in hormone and neurotransmitter calcium-dependent exocytosis and endocytosis. Part of the SNARE (Soluble NSF Attachment Receptor) complex composed of SNAP25, STX1A and VAMP2 which mediates the fusion of synaptic vesicles with the presynaptic plasma membrane. STX1A and SNAP25 are localized on the plasma membrane while VAMP2 resides in synaptic vesicles. The pairing of the three SNAREs from the N-terminal SNARE motifs to the C-terminal anchors leads to the formation of the SNARE complex, which brings membranes into close proximity and results in final fusion (By similarity). Participates in the calcium-dependent regulation of acrosomal exocytosis in sperm. Also plays an important role in the exocytosis of hormones such as insulin or glucagon-like peptide 1 (GLP-1) (By similarity).</text>
</comment>
<comment type="subunit">
    <text evidence="2 3 4">Part of the SNARE core complex containing SNAP25, VAMP2 and STX1A; this complex constitutes the basic catalytic machinery of the complex neurotransmitter release apparatus. The SNARE complex interacts with CPLX1. Interacts with STXBP1. The interaction with STXBP1 promotes assembly of the SNARE complex (By similarity). Interacts (via C-terminus) with KCNB1 (via C-terminus); the interaction increases in a calcium-dependent manner and induces a pore-independent enhancement of exocytosis in neuroendocrine cells, chromaffin cells, pancreatic beta cells and from the soma of dorsal root ganglia (DRG) neurons (By similarity). Interacts with SYTL4 (By similarity). Interacts with STXBP6. Interacts with PLCL1 (via C2 domain) (By similarity). Interacts with OTOF. Interacts with LGI3 (By similarity). Interacts (via the H3 domain) with SLC6A4 (via the N-terminus); this interaction regulates SLC4A6 channel conductance in thalamocortical neurons (By similarity). Interacts with SYT6 and SYT8; the interaction is Ca(2+)-dependent (By similarity). Interacts with VAMP8. Interacts with SNAP23 (By similarity). Interacts with VAPA and SYBU (By similarity). Interacts with PRRT2 (By similarity). Interacts with SEPT8 (By similarity). Interacts with STXBP5L (By similarity). Interacts with synaptotagmin-1/SYT1 (By similarity). Interacts with SEPTIN5; in the cerebellar cortex (By similarity). Interacts with SEPTIN4; in the striatum (By similarity).</text>
</comment>
<comment type="interaction">
    <interactant intactId="EBI-7336000">
        <id>P32850</id>
    </interactant>
    <interactant intactId="EBI-7335973">
        <id>P61763</id>
        <label>STXBP1</label>
    </interactant>
    <organismsDiffer>false</organismsDiffer>
    <experiments>3</experiments>
</comment>
<comment type="subcellular location">
    <subcellularLocation>
        <location evidence="2">Cytoplasmic vesicle</location>
        <location evidence="2">Secretory vesicle</location>
        <location evidence="2">Synaptic vesicle membrane</location>
        <topology evidence="2">Single-pass type IV membrane protein</topology>
    </subcellularLocation>
    <subcellularLocation>
        <location evidence="2">Synapse</location>
        <location evidence="2">Synaptosome</location>
    </subcellularLocation>
    <subcellularLocation>
        <location evidence="3">Cell membrane</location>
    </subcellularLocation>
    <text evidence="3">Colocalizes with KCNB1 at the cell membrane.</text>
</comment>
<comment type="PTM">
    <text evidence="1">Phosphorylated by CK2. Phosphorylation at Ser-188 by DAPK1 significantly decreases its interaction with STXBP1 (By similarity).</text>
</comment>
<comment type="PTM">
    <text evidence="4">Sumoylated, sumoylation is required for regulation of synaptic vesicle endocytosis.</text>
</comment>
<comment type="PTM">
    <text evidence="9">(Microbial infection) Targeted and hydrolyzed by C.botulinum neurotoxin type C (BoNT/C) which inhibits neurotransmitter release (PubMed:8611567). Probably hydrolyzes the 253-Lys-|-Ala-254 bond.</text>
</comment>
<comment type="similarity">
    <text evidence="8">Belongs to the syntaxin family.</text>
</comment>
<reference key="1">
    <citation type="journal article" date="1992" name="Biochem. Biophys. Res. Commun.">
        <title>Neuron-specific antigen HPC-1 from bovine brain reveals strong homology to epimorphin, an essential factor involved in epithelial morphogenesis: identification of a novel protein family.</title>
        <authorList>
            <person name="Inoue A."/>
            <person name="Akagawa K."/>
        </authorList>
    </citation>
    <scope>NUCLEOTIDE SEQUENCE [MRNA]</scope>
    <source>
        <tissue>Brain</tissue>
    </source>
</reference>
<reference key="2">
    <citation type="journal article" date="1993" name="Nature">
        <title>SNAP receptors implicated in vesicle targeting and fusion.</title>
        <authorList>
            <person name="Soellner T."/>
            <person name="Whiteheart S.W."/>
            <person name="Brunner M."/>
            <person name="Erdjument-Bromage H."/>
            <person name="Geromanos S."/>
            <person name="Tempst P."/>
            <person name="Rothman J.E."/>
        </authorList>
    </citation>
    <scope>PROTEIN SEQUENCE OF 29-40; 43-55; 97-106; 160-166 AND 213-224</scope>
</reference>
<reference key="3">
    <citation type="journal article" date="1996" name="Biochemistry">
        <title>Botulinum neurotoxin C1 cleaves both syntaxin and SNAP-25 in intact and permeabilized chromaffin cells: correlation with its blockade of catecholamine release.</title>
        <authorList>
            <person name="Foran P."/>
            <person name="Lawrence G.W."/>
            <person name="Shone C.C."/>
            <person name="Foster K.A."/>
            <person name="Dolly J.O."/>
        </authorList>
    </citation>
    <scope>PROTEOLYTIC CLEAVAGE (MICROBIAL INFECTION) BY C.BOTULINUM NEUROTOXIN TYPE C</scope>
    <source>
        <tissue>Chromaffin cell</tissue>
    </source>
</reference>
<name>STX1A_BOVIN</name>
<sequence>MKDRTQELRTAKDSDDDDDVTVTVDRDRFMDEFFEQVEEIRGFIDKISENVEEVKRKHSAILASPNPDEKTKEELEELMSDIKKTANKVRSKLKSIEQSIEQEEGLNRSSADLRIRKTQHSTLSRKFVEVMSEYNATQSDYRERCKGRIQRQLEITGRTTTSEELEDMLESGNPAIFASGIIMDSSISKQALSEIETRHSEIIKLENSIRELHDMFMDMAMLVESQGEMIDRIEYNVEHSVDYVERAVSDTKKAVKYQSKARRKKIMIVICCVVLGIVIASTFGGIFG</sequence>
<organism>
    <name type="scientific">Bos taurus</name>
    <name type="common">Bovine</name>
    <dbReference type="NCBI Taxonomy" id="9913"/>
    <lineage>
        <taxon>Eukaryota</taxon>
        <taxon>Metazoa</taxon>
        <taxon>Chordata</taxon>
        <taxon>Craniata</taxon>
        <taxon>Vertebrata</taxon>
        <taxon>Euteleostomi</taxon>
        <taxon>Mammalia</taxon>
        <taxon>Eutheria</taxon>
        <taxon>Laurasiatheria</taxon>
        <taxon>Artiodactyla</taxon>
        <taxon>Ruminantia</taxon>
        <taxon>Pecora</taxon>
        <taxon>Bovidae</taxon>
        <taxon>Bovinae</taxon>
        <taxon>Bos</taxon>
    </lineage>
</organism>
<proteinExistence type="evidence at protein level"/>